<name>RS7_LACE2</name>
<organism>
    <name type="scientific">Lachnospira eligens (strain ATCC 27750 / DSM 3376 / VPI C15-48 / C15-B4)</name>
    <name type="common">Eubacterium eligens</name>
    <dbReference type="NCBI Taxonomy" id="515620"/>
    <lineage>
        <taxon>Bacteria</taxon>
        <taxon>Bacillati</taxon>
        <taxon>Bacillota</taxon>
        <taxon>Clostridia</taxon>
        <taxon>Lachnospirales</taxon>
        <taxon>Lachnospiraceae</taxon>
        <taxon>Lachnospira</taxon>
    </lineage>
</organism>
<evidence type="ECO:0000255" key="1">
    <source>
        <dbReference type="HAMAP-Rule" id="MF_00480"/>
    </source>
</evidence>
<evidence type="ECO:0000305" key="2"/>
<protein>
    <recommendedName>
        <fullName evidence="1">Small ribosomal subunit protein uS7</fullName>
    </recommendedName>
    <alternativeName>
        <fullName evidence="2">30S ribosomal protein S7</fullName>
    </alternativeName>
</protein>
<accession>C4Z2R7</accession>
<feature type="chain" id="PRO_1000206403" description="Small ribosomal subunit protein uS7">
    <location>
        <begin position="1"/>
        <end position="156"/>
    </location>
</feature>
<reference key="1">
    <citation type="journal article" date="2009" name="Proc. Natl. Acad. Sci. U.S.A.">
        <title>Characterizing a model human gut microbiota composed of members of its two dominant bacterial phyla.</title>
        <authorList>
            <person name="Mahowald M.A."/>
            <person name="Rey F.E."/>
            <person name="Seedorf H."/>
            <person name="Turnbaugh P.J."/>
            <person name="Fulton R.S."/>
            <person name="Wollam A."/>
            <person name="Shah N."/>
            <person name="Wang C."/>
            <person name="Magrini V."/>
            <person name="Wilson R.K."/>
            <person name="Cantarel B.L."/>
            <person name="Coutinho P.M."/>
            <person name="Henrissat B."/>
            <person name="Crock L.W."/>
            <person name="Russell A."/>
            <person name="Verberkmoes N.C."/>
            <person name="Hettich R.L."/>
            <person name="Gordon J.I."/>
        </authorList>
    </citation>
    <scope>NUCLEOTIDE SEQUENCE [LARGE SCALE GENOMIC DNA]</scope>
    <source>
        <strain>ATCC 27750 / DSM 3376 / VPI C15-48 / C15-B4</strain>
    </source>
</reference>
<comment type="function">
    <text evidence="1">One of the primary rRNA binding proteins, it binds directly to 16S rRNA where it nucleates assembly of the head domain of the 30S subunit. Is located at the subunit interface close to the decoding center, probably blocks exit of the E-site tRNA.</text>
</comment>
<comment type="subunit">
    <text evidence="1">Part of the 30S ribosomal subunit. Contacts proteins S9 and S11.</text>
</comment>
<comment type="similarity">
    <text evidence="1">Belongs to the universal ribosomal protein uS7 family.</text>
</comment>
<dbReference type="EMBL" id="CP001104">
    <property type="protein sequence ID" value="ACR71322.1"/>
    <property type="molecule type" value="Genomic_DNA"/>
</dbReference>
<dbReference type="RefSeq" id="WP_012738559.1">
    <property type="nucleotide sequence ID" value="NC_012778.1"/>
</dbReference>
<dbReference type="SMR" id="C4Z2R7"/>
<dbReference type="STRING" id="515620.EUBELI_00286"/>
<dbReference type="GeneID" id="41355059"/>
<dbReference type="KEGG" id="eel:EUBELI_00286"/>
<dbReference type="eggNOG" id="COG0049">
    <property type="taxonomic scope" value="Bacteria"/>
</dbReference>
<dbReference type="HOGENOM" id="CLU_072226_1_1_9"/>
<dbReference type="Proteomes" id="UP000001476">
    <property type="component" value="Chromosome"/>
</dbReference>
<dbReference type="GO" id="GO:0015935">
    <property type="term" value="C:small ribosomal subunit"/>
    <property type="evidence" value="ECO:0007669"/>
    <property type="project" value="InterPro"/>
</dbReference>
<dbReference type="GO" id="GO:0019843">
    <property type="term" value="F:rRNA binding"/>
    <property type="evidence" value="ECO:0007669"/>
    <property type="project" value="UniProtKB-UniRule"/>
</dbReference>
<dbReference type="GO" id="GO:0003735">
    <property type="term" value="F:structural constituent of ribosome"/>
    <property type="evidence" value="ECO:0007669"/>
    <property type="project" value="InterPro"/>
</dbReference>
<dbReference type="GO" id="GO:0000049">
    <property type="term" value="F:tRNA binding"/>
    <property type="evidence" value="ECO:0007669"/>
    <property type="project" value="UniProtKB-UniRule"/>
</dbReference>
<dbReference type="GO" id="GO:0006412">
    <property type="term" value="P:translation"/>
    <property type="evidence" value="ECO:0007669"/>
    <property type="project" value="UniProtKB-UniRule"/>
</dbReference>
<dbReference type="CDD" id="cd14869">
    <property type="entry name" value="uS7_Bacteria"/>
    <property type="match status" value="1"/>
</dbReference>
<dbReference type="FunFam" id="1.10.455.10:FF:000001">
    <property type="entry name" value="30S ribosomal protein S7"/>
    <property type="match status" value="1"/>
</dbReference>
<dbReference type="Gene3D" id="1.10.455.10">
    <property type="entry name" value="Ribosomal protein S7 domain"/>
    <property type="match status" value="1"/>
</dbReference>
<dbReference type="HAMAP" id="MF_00480_B">
    <property type="entry name" value="Ribosomal_uS7_B"/>
    <property type="match status" value="1"/>
</dbReference>
<dbReference type="InterPro" id="IPR000235">
    <property type="entry name" value="Ribosomal_uS7"/>
</dbReference>
<dbReference type="InterPro" id="IPR005717">
    <property type="entry name" value="Ribosomal_uS7_bac/org-type"/>
</dbReference>
<dbReference type="InterPro" id="IPR020606">
    <property type="entry name" value="Ribosomal_uS7_CS"/>
</dbReference>
<dbReference type="InterPro" id="IPR023798">
    <property type="entry name" value="Ribosomal_uS7_dom"/>
</dbReference>
<dbReference type="InterPro" id="IPR036823">
    <property type="entry name" value="Ribosomal_uS7_dom_sf"/>
</dbReference>
<dbReference type="NCBIfam" id="TIGR01029">
    <property type="entry name" value="rpsG_bact"/>
    <property type="match status" value="1"/>
</dbReference>
<dbReference type="PANTHER" id="PTHR11205">
    <property type="entry name" value="RIBOSOMAL PROTEIN S7"/>
    <property type="match status" value="1"/>
</dbReference>
<dbReference type="Pfam" id="PF00177">
    <property type="entry name" value="Ribosomal_S7"/>
    <property type="match status" value="1"/>
</dbReference>
<dbReference type="PIRSF" id="PIRSF002122">
    <property type="entry name" value="RPS7p_RPS7a_RPS5e_RPS7o"/>
    <property type="match status" value="1"/>
</dbReference>
<dbReference type="SUPFAM" id="SSF47973">
    <property type="entry name" value="Ribosomal protein S7"/>
    <property type="match status" value="1"/>
</dbReference>
<dbReference type="PROSITE" id="PS00052">
    <property type="entry name" value="RIBOSOMAL_S7"/>
    <property type="match status" value="1"/>
</dbReference>
<proteinExistence type="inferred from homology"/>
<gene>
    <name evidence="1" type="primary">rpsG</name>
    <name type="ordered locus">EUBELI_00286</name>
</gene>
<keyword id="KW-1185">Reference proteome</keyword>
<keyword id="KW-0687">Ribonucleoprotein</keyword>
<keyword id="KW-0689">Ribosomal protein</keyword>
<keyword id="KW-0694">RNA-binding</keyword>
<keyword id="KW-0699">rRNA-binding</keyword>
<keyword id="KW-0820">tRNA-binding</keyword>
<sequence>MPRKGHTQKRDVLADPIYNNKVVTKLINNIMLDGKRGVAQKIVYGAFDRVAAKTERPAIEVFEEAMNNIMPVLEVKARRIGGATYQVPIEVKPDRRQALALRWMTTFSRARGEKTMEERLANEILDAANNTGASVKRKEDMHKMAEANKAFAHYRF</sequence>